<sequence>MEEWVEKYRPKSLNDVAGHNKTKQALINWIESFVNGQKQKPILLAGPPGSGKTTLAHAIAKDYAFDVIELNASDKRNKDVIAQVVGTAATSKSLTGKRTLIVLDEVDGLSGNDDRGGVAEIIKVLKTAENPVILTANDVYKPALMTLRNNVNLINVGSVHTNSIPPVLRKIALKEGFEIDEKVIKTIASHSGGDLRAAINDLQSLATGGSLEVEDAKELPDRDSEKSIFDAMRIIMKTTHYDIATSATRDVKEDLGTIQEWISENLPKEYLRYKDLAGGYDYLSKSDVFLGRVFKRQYFGLWRYASALMTAGTALAKEEKYRGFTRYGPPTIFTKLSRTKGSRQKMKDILKKIALKTHTSTKRARNTLDYLVVIFESNPEVSAELVEYYELTKLEMEFLTNKTIAKNIFSVIAGKKPKVKTETPKKKEKTKEAMPIIPKRPRISEPPEPLKEVITTIEKSVEKADTKEKEKKDPKKQATLDSFF</sequence>
<gene>
    <name evidence="1" type="primary">rfcL</name>
    <name type="ordered locus">MmarC5_1352</name>
</gene>
<comment type="function">
    <text evidence="1">Part of the RFC clamp loader complex which loads the PCNA sliding clamp onto DNA.</text>
</comment>
<comment type="subunit">
    <text evidence="1">Heteromultimer composed of small subunits (RfcS) and large subunits (RfcL).</text>
</comment>
<comment type="similarity">
    <text evidence="1">Belongs to the activator 1 small subunits family. RfcL subfamily.</text>
</comment>
<protein>
    <recommendedName>
        <fullName evidence="1">Replication factor C large subunit</fullName>
        <shortName evidence="1">RFC large subunit</shortName>
    </recommendedName>
    <alternativeName>
        <fullName evidence="1">Clamp loader large subunit</fullName>
    </alternativeName>
</protein>
<organism>
    <name type="scientific">Methanococcus maripaludis (strain C5 / ATCC BAA-1333)</name>
    <dbReference type="NCBI Taxonomy" id="402880"/>
    <lineage>
        <taxon>Archaea</taxon>
        <taxon>Methanobacteriati</taxon>
        <taxon>Methanobacteriota</taxon>
        <taxon>Methanomada group</taxon>
        <taxon>Methanococci</taxon>
        <taxon>Methanococcales</taxon>
        <taxon>Methanococcaceae</taxon>
        <taxon>Methanococcus</taxon>
    </lineage>
</organism>
<keyword id="KW-0067">ATP-binding</keyword>
<keyword id="KW-0235">DNA replication</keyword>
<keyword id="KW-0547">Nucleotide-binding</keyword>
<reference key="1">
    <citation type="submission" date="2007-03" db="EMBL/GenBank/DDBJ databases">
        <title>Complete sequence of chromosome of Methanococcus maripaludis C5.</title>
        <authorList>
            <consortium name="US DOE Joint Genome Institute"/>
            <person name="Copeland A."/>
            <person name="Lucas S."/>
            <person name="Lapidus A."/>
            <person name="Barry K."/>
            <person name="Glavina del Rio T."/>
            <person name="Dalin E."/>
            <person name="Tice H."/>
            <person name="Pitluck S."/>
            <person name="Chertkov O."/>
            <person name="Brettin T."/>
            <person name="Bruce D."/>
            <person name="Han C."/>
            <person name="Detter J.C."/>
            <person name="Schmutz J."/>
            <person name="Larimer F."/>
            <person name="Land M."/>
            <person name="Hauser L."/>
            <person name="Kyrpides N."/>
            <person name="Mikhailova N."/>
            <person name="Sieprawska-Lupa M."/>
            <person name="Whitman W.B."/>
            <person name="Richardson P."/>
        </authorList>
    </citation>
    <scope>NUCLEOTIDE SEQUENCE [LARGE SCALE GENOMIC DNA]</scope>
    <source>
        <strain>C5 / ATCC BAA-1333</strain>
    </source>
</reference>
<name>RFCL_METM5</name>
<dbReference type="EMBL" id="CP000609">
    <property type="protein sequence ID" value="ABO35650.1"/>
    <property type="molecule type" value="Genomic_DNA"/>
</dbReference>
<dbReference type="RefSeq" id="WP_011869101.1">
    <property type="nucleotide sequence ID" value="NC_009135.1"/>
</dbReference>
<dbReference type="SMR" id="A4FZL6"/>
<dbReference type="STRING" id="402880.MmarC5_1352"/>
<dbReference type="GeneID" id="4928141"/>
<dbReference type="KEGG" id="mmq:MmarC5_1352"/>
<dbReference type="eggNOG" id="arCOG00470">
    <property type="taxonomic scope" value="Archaea"/>
</dbReference>
<dbReference type="HOGENOM" id="CLU_027255_1_0_2"/>
<dbReference type="OrthoDB" id="8658at2157"/>
<dbReference type="Proteomes" id="UP000000253">
    <property type="component" value="Chromosome"/>
</dbReference>
<dbReference type="GO" id="GO:0005524">
    <property type="term" value="F:ATP binding"/>
    <property type="evidence" value="ECO:0007669"/>
    <property type="project" value="UniProtKB-UniRule"/>
</dbReference>
<dbReference type="GO" id="GO:0016887">
    <property type="term" value="F:ATP hydrolysis activity"/>
    <property type="evidence" value="ECO:0007669"/>
    <property type="project" value="InterPro"/>
</dbReference>
<dbReference type="GO" id="GO:0003689">
    <property type="term" value="F:DNA clamp loader activity"/>
    <property type="evidence" value="ECO:0007669"/>
    <property type="project" value="UniProtKB-UniRule"/>
</dbReference>
<dbReference type="GO" id="GO:0006260">
    <property type="term" value="P:DNA replication"/>
    <property type="evidence" value="ECO:0007669"/>
    <property type="project" value="UniProtKB-UniRule"/>
</dbReference>
<dbReference type="CDD" id="cd00009">
    <property type="entry name" value="AAA"/>
    <property type="match status" value="1"/>
</dbReference>
<dbReference type="CDD" id="cd18140">
    <property type="entry name" value="HLD_clamp_RFC"/>
    <property type="match status" value="1"/>
</dbReference>
<dbReference type="Gene3D" id="1.10.8.60">
    <property type="match status" value="1"/>
</dbReference>
<dbReference type="Gene3D" id="3.40.50.300">
    <property type="entry name" value="P-loop containing nucleotide triphosphate hydrolases"/>
    <property type="match status" value="1"/>
</dbReference>
<dbReference type="HAMAP" id="MF_01508">
    <property type="entry name" value="RfcL"/>
    <property type="match status" value="1"/>
</dbReference>
<dbReference type="InterPro" id="IPR003593">
    <property type="entry name" value="AAA+_ATPase"/>
</dbReference>
<dbReference type="InterPro" id="IPR003959">
    <property type="entry name" value="ATPase_AAA_core"/>
</dbReference>
<dbReference type="InterPro" id="IPR027417">
    <property type="entry name" value="P-loop_NTPase"/>
</dbReference>
<dbReference type="InterPro" id="IPR023935">
    <property type="entry name" value="Rep_factor-C_lsu"/>
</dbReference>
<dbReference type="InterPro" id="IPR047854">
    <property type="entry name" value="RFC_lid"/>
</dbReference>
<dbReference type="NCBIfam" id="NF003229">
    <property type="entry name" value="PRK04195.1-5"/>
    <property type="match status" value="1"/>
</dbReference>
<dbReference type="NCBIfam" id="NF003230">
    <property type="entry name" value="PRK04195.1-6"/>
    <property type="match status" value="1"/>
</dbReference>
<dbReference type="PANTHER" id="PTHR23389">
    <property type="entry name" value="CHROMOSOME TRANSMISSION FIDELITY FACTOR 18"/>
    <property type="match status" value="1"/>
</dbReference>
<dbReference type="PANTHER" id="PTHR23389:SF6">
    <property type="entry name" value="REPLICATION FACTOR C SUBUNIT 1"/>
    <property type="match status" value="1"/>
</dbReference>
<dbReference type="Pfam" id="PF00004">
    <property type="entry name" value="AAA"/>
    <property type="match status" value="1"/>
</dbReference>
<dbReference type="Pfam" id="PF21960">
    <property type="entry name" value="RCF1-5-like_lid"/>
    <property type="match status" value="1"/>
</dbReference>
<dbReference type="SMART" id="SM00382">
    <property type="entry name" value="AAA"/>
    <property type="match status" value="1"/>
</dbReference>
<dbReference type="SUPFAM" id="SSF52540">
    <property type="entry name" value="P-loop containing nucleoside triphosphate hydrolases"/>
    <property type="match status" value="1"/>
</dbReference>
<evidence type="ECO:0000255" key="1">
    <source>
        <dbReference type="HAMAP-Rule" id="MF_01508"/>
    </source>
</evidence>
<evidence type="ECO:0000256" key="2">
    <source>
        <dbReference type="SAM" id="MobiDB-lite"/>
    </source>
</evidence>
<proteinExistence type="inferred from homology"/>
<accession>A4FZL6</accession>
<feature type="chain" id="PRO_0000318540" description="Replication factor C large subunit">
    <location>
        <begin position="1"/>
        <end position="484"/>
    </location>
</feature>
<feature type="region of interest" description="Disordered" evidence="2">
    <location>
        <begin position="419"/>
        <end position="484"/>
    </location>
</feature>
<feature type="compositionally biased region" description="Basic and acidic residues" evidence="2">
    <location>
        <begin position="419"/>
        <end position="432"/>
    </location>
</feature>
<feature type="compositionally biased region" description="Basic and acidic residues" evidence="2">
    <location>
        <begin position="442"/>
        <end position="451"/>
    </location>
</feature>
<feature type="compositionally biased region" description="Basic and acidic residues" evidence="2">
    <location>
        <begin position="459"/>
        <end position="478"/>
    </location>
</feature>
<feature type="binding site" evidence="1">
    <location>
        <begin position="46"/>
        <end position="53"/>
    </location>
    <ligand>
        <name>ATP</name>
        <dbReference type="ChEBI" id="CHEBI:30616"/>
    </ligand>
</feature>